<evidence type="ECO:0000255" key="1">
    <source>
        <dbReference type="HAMAP-Rule" id="MF_00197"/>
    </source>
</evidence>
<dbReference type="EC" id="5.1.1.7" evidence="1"/>
<dbReference type="EMBL" id="FM180568">
    <property type="protein sequence ID" value="CAS11657.1"/>
    <property type="molecule type" value="Genomic_DNA"/>
</dbReference>
<dbReference type="RefSeq" id="WP_001160653.1">
    <property type="nucleotide sequence ID" value="NC_011601.1"/>
</dbReference>
<dbReference type="SMR" id="B7UNC6"/>
<dbReference type="KEGG" id="ecg:E2348C_4109"/>
<dbReference type="HOGENOM" id="CLU_053306_1_1_6"/>
<dbReference type="UniPathway" id="UPA00034">
    <property type="reaction ID" value="UER00025"/>
</dbReference>
<dbReference type="Proteomes" id="UP000008205">
    <property type="component" value="Chromosome"/>
</dbReference>
<dbReference type="GO" id="GO:0005829">
    <property type="term" value="C:cytosol"/>
    <property type="evidence" value="ECO:0007669"/>
    <property type="project" value="TreeGrafter"/>
</dbReference>
<dbReference type="GO" id="GO:0008837">
    <property type="term" value="F:diaminopimelate epimerase activity"/>
    <property type="evidence" value="ECO:0007669"/>
    <property type="project" value="UniProtKB-UniRule"/>
</dbReference>
<dbReference type="GO" id="GO:0009089">
    <property type="term" value="P:lysine biosynthetic process via diaminopimelate"/>
    <property type="evidence" value="ECO:0007669"/>
    <property type="project" value="UniProtKB-UniRule"/>
</dbReference>
<dbReference type="FunFam" id="3.10.310.10:FF:000001">
    <property type="entry name" value="Diaminopimelate epimerase"/>
    <property type="match status" value="1"/>
</dbReference>
<dbReference type="FunFam" id="3.10.310.10:FF:000002">
    <property type="entry name" value="Diaminopimelate epimerase"/>
    <property type="match status" value="1"/>
</dbReference>
<dbReference type="Gene3D" id="3.10.310.10">
    <property type="entry name" value="Diaminopimelate Epimerase, Chain A, domain 1"/>
    <property type="match status" value="2"/>
</dbReference>
<dbReference type="HAMAP" id="MF_00197">
    <property type="entry name" value="DAP_epimerase"/>
    <property type="match status" value="1"/>
</dbReference>
<dbReference type="InterPro" id="IPR018510">
    <property type="entry name" value="DAP_epimerase_AS"/>
</dbReference>
<dbReference type="InterPro" id="IPR001653">
    <property type="entry name" value="DAP_epimerase_DapF"/>
</dbReference>
<dbReference type="NCBIfam" id="TIGR00652">
    <property type="entry name" value="DapF"/>
    <property type="match status" value="1"/>
</dbReference>
<dbReference type="PANTHER" id="PTHR31689:SF0">
    <property type="entry name" value="DIAMINOPIMELATE EPIMERASE"/>
    <property type="match status" value="1"/>
</dbReference>
<dbReference type="PANTHER" id="PTHR31689">
    <property type="entry name" value="DIAMINOPIMELATE EPIMERASE, CHLOROPLASTIC"/>
    <property type="match status" value="1"/>
</dbReference>
<dbReference type="Pfam" id="PF01678">
    <property type="entry name" value="DAP_epimerase"/>
    <property type="match status" value="2"/>
</dbReference>
<dbReference type="SUPFAM" id="SSF54506">
    <property type="entry name" value="Diaminopimelate epimerase-like"/>
    <property type="match status" value="1"/>
</dbReference>
<dbReference type="PROSITE" id="PS01326">
    <property type="entry name" value="DAP_EPIMERASE"/>
    <property type="match status" value="1"/>
</dbReference>
<accession>B7UNC6</accession>
<reference key="1">
    <citation type="journal article" date="2009" name="J. Bacteriol.">
        <title>Complete genome sequence and comparative genome analysis of enteropathogenic Escherichia coli O127:H6 strain E2348/69.</title>
        <authorList>
            <person name="Iguchi A."/>
            <person name="Thomson N.R."/>
            <person name="Ogura Y."/>
            <person name="Saunders D."/>
            <person name="Ooka T."/>
            <person name="Henderson I.R."/>
            <person name="Harris D."/>
            <person name="Asadulghani M."/>
            <person name="Kurokawa K."/>
            <person name="Dean P."/>
            <person name="Kenny B."/>
            <person name="Quail M.A."/>
            <person name="Thurston S."/>
            <person name="Dougan G."/>
            <person name="Hayashi T."/>
            <person name="Parkhill J."/>
            <person name="Frankel G."/>
        </authorList>
    </citation>
    <scope>NUCLEOTIDE SEQUENCE [LARGE SCALE GENOMIC DNA]</scope>
    <source>
        <strain>E2348/69 / EPEC</strain>
    </source>
</reference>
<organism>
    <name type="scientific">Escherichia coli O127:H6 (strain E2348/69 / EPEC)</name>
    <dbReference type="NCBI Taxonomy" id="574521"/>
    <lineage>
        <taxon>Bacteria</taxon>
        <taxon>Pseudomonadati</taxon>
        <taxon>Pseudomonadota</taxon>
        <taxon>Gammaproteobacteria</taxon>
        <taxon>Enterobacterales</taxon>
        <taxon>Enterobacteriaceae</taxon>
        <taxon>Escherichia</taxon>
    </lineage>
</organism>
<protein>
    <recommendedName>
        <fullName evidence="1">Diaminopimelate epimerase</fullName>
        <shortName evidence="1">DAP epimerase</shortName>
        <ecNumber evidence="1">5.1.1.7</ecNumber>
    </recommendedName>
    <alternativeName>
        <fullName evidence="1">PLP-independent amino acid racemase</fullName>
    </alternativeName>
</protein>
<proteinExistence type="inferred from homology"/>
<gene>
    <name evidence="1" type="primary">dapF</name>
    <name type="ordered locus">E2348C_4109</name>
</gene>
<name>DAPF_ECO27</name>
<comment type="function">
    <text evidence="1">Catalyzes the stereoinversion of LL-2,6-diaminopimelate (L,L-DAP) to meso-diaminopimelate (meso-DAP), a precursor of L-lysine and an essential component of the bacterial peptidoglycan.</text>
</comment>
<comment type="catalytic activity">
    <reaction evidence="1">
        <text>(2S,6S)-2,6-diaminopimelate = meso-2,6-diaminopimelate</text>
        <dbReference type="Rhea" id="RHEA:15393"/>
        <dbReference type="ChEBI" id="CHEBI:57609"/>
        <dbReference type="ChEBI" id="CHEBI:57791"/>
        <dbReference type="EC" id="5.1.1.7"/>
    </reaction>
</comment>
<comment type="pathway">
    <text evidence="1">Amino-acid biosynthesis; L-lysine biosynthesis via DAP pathway; DL-2,6-diaminopimelate from LL-2,6-diaminopimelate: step 1/1.</text>
</comment>
<comment type="subunit">
    <text evidence="1">Homodimer.</text>
</comment>
<comment type="subcellular location">
    <subcellularLocation>
        <location evidence="1">Cytoplasm</location>
    </subcellularLocation>
</comment>
<comment type="similarity">
    <text evidence="1">Belongs to the diaminopimelate epimerase family.</text>
</comment>
<keyword id="KW-0028">Amino-acid biosynthesis</keyword>
<keyword id="KW-0963">Cytoplasm</keyword>
<keyword id="KW-0413">Isomerase</keyword>
<keyword id="KW-0457">Lysine biosynthesis</keyword>
<keyword id="KW-1185">Reference proteome</keyword>
<sequence>MQFSKMHGLGNDFMVVDAVTQNVFFSPELIRRLADRHLGVGFDQLLVVEPPYDPELDFHYRIFNADGSEVAQCGNGARCFARFVRLKGLTNKRDIRVSTANGRMVLTVTDDDLVRVNMGEPNFEPSAVPFRANKAEKTYIMRAAEQTILCGVVSMGNPHCVIQVDDVDTAAVETLGPVLESHERFPERANIGFMQVVKREHIRLRVFERGAGETQACGSGACAAVAVGIQQGLLAEEVRVELPGGRLDIAWKGPGHPLYMTGPAVHVYDGFIHL</sequence>
<feature type="chain" id="PRO_1000124413" description="Diaminopimelate epimerase">
    <location>
        <begin position="1"/>
        <end position="274"/>
    </location>
</feature>
<feature type="active site" description="Proton donor" evidence="1">
    <location>
        <position position="73"/>
    </location>
</feature>
<feature type="active site" description="Proton acceptor" evidence="1">
    <location>
        <position position="217"/>
    </location>
</feature>
<feature type="binding site" evidence="1">
    <location>
        <position position="11"/>
    </location>
    <ligand>
        <name>substrate</name>
    </ligand>
</feature>
<feature type="binding site" evidence="1">
    <location>
        <position position="44"/>
    </location>
    <ligand>
        <name>substrate</name>
    </ligand>
</feature>
<feature type="binding site" evidence="1">
    <location>
        <position position="64"/>
    </location>
    <ligand>
        <name>substrate</name>
    </ligand>
</feature>
<feature type="binding site" evidence="1">
    <location>
        <begin position="74"/>
        <end position="75"/>
    </location>
    <ligand>
        <name>substrate</name>
    </ligand>
</feature>
<feature type="binding site" evidence="1">
    <location>
        <position position="157"/>
    </location>
    <ligand>
        <name>substrate</name>
    </ligand>
</feature>
<feature type="binding site" evidence="1">
    <location>
        <position position="190"/>
    </location>
    <ligand>
        <name>substrate</name>
    </ligand>
</feature>
<feature type="binding site" evidence="1">
    <location>
        <begin position="208"/>
        <end position="209"/>
    </location>
    <ligand>
        <name>substrate</name>
    </ligand>
</feature>
<feature type="binding site" evidence="1">
    <location>
        <begin position="218"/>
        <end position="219"/>
    </location>
    <ligand>
        <name>substrate</name>
    </ligand>
</feature>
<feature type="site" description="Could be important to modulate the pK values of the two catalytic cysteine residues" evidence="1">
    <location>
        <position position="159"/>
    </location>
</feature>
<feature type="site" description="Could be important to modulate the pK values of the two catalytic cysteine residues" evidence="1">
    <location>
        <position position="208"/>
    </location>
</feature>
<feature type="site" description="Important for dimerization" evidence="1">
    <location>
        <position position="268"/>
    </location>
</feature>